<keyword id="KW-1003">Cell membrane</keyword>
<keyword id="KW-0472">Membrane</keyword>
<keyword id="KW-0812">Transmembrane</keyword>
<keyword id="KW-1133">Transmembrane helix</keyword>
<dbReference type="EMBL" id="CU928158">
    <property type="protein sequence ID" value="CAQ88247.1"/>
    <property type="molecule type" value="Genomic_DNA"/>
</dbReference>
<dbReference type="RefSeq" id="WP_000383836.1">
    <property type="nucleotide sequence ID" value="NC_011740.1"/>
</dbReference>
<dbReference type="SMR" id="B7LKG9"/>
<dbReference type="KEGG" id="efe:EFER_0705"/>
<dbReference type="HOGENOM" id="CLU_198936_0_0_6"/>
<dbReference type="Proteomes" id="UP000000745">
    <property type="component" value="Chromosome"/>
</dbReference>
<dbReference type="GO" id="GO:0005886">
    <property type="term" value="C:plasma membrane"/>
    <property type="evidence" value="ECO:0007669"/>
    <property type="project" value="UniProtKB-SubCell"/>
</dbReference>
<dbReference type="HAMAP" id="MF_01566">
    <property type="entry name" value="UPF0370"/>
    <property type="match status" value="1"/>
</dbReference>
<dbReference type="InterPro" id="IPR020910">
    <property type="entry name" value="UPF0370"/>
</dbReference>
<dbReference type="NCBIfam" id="NF010185">
    <property type="entry name" value="PRK13664.1"/>
    <property type="match status" value="1"/>
</dbReference>
<dbReference type="Pfam" id="PF13980">
    <property type="entry name" value="UPF0370"/>
    <property type="match status" value="1"/>
</dbReference>
<accession>B7LKG9</accession>
<proteinExistence type="inferred from homology"/>
<reference key="1">
    <citation type="journal article" date="2009" name="PLoS Genet.">
        <title>Organised genome dynamics in the Escherichia coli species results in highly diverse adaptive paths.</title>
        <authorList>
            <person name="Touchon M."/>
            <person name="Hoede C."/>
            <person name="Tenaillon O."/>
            <person name="Barbe V."/>
            <person name="Baeriswyl S."/>
            <person name="Bidet P."/>
            <person name="Bingen E."/>
            <person name="Bonacorsi S."/>
            <person name="Bouchier C."/>
            <person name="Bouvet O."/>
            <person name="Calteau A."/>
            <person name="Chiapello H."/>
            <person name="Clermont O."/>
            <person name="Cruveiller S."/>
            <person name="Danchin A."/>
            <person name="Diard M."/>
            <person name="Dossat C."/>
            <person name="Karoui M.E."/>
            <person name="Frapy E."/>
            <person name="Garry L."/>
            <person name="Ghigo J.M."/>
            <person name="Gilles A.M."/>
            <person name="Johnson J."/>
            <person name="Le Bouguenec C."/>
            <person name="Lescat M."/>
            <person name="Mangenot S."/>
            <person name="Martinez-Jehanne V."/>
            <person name="Matic I."/>
            <person name="Nassif X."/>
            <person name="Oztas S."/>
            <person name="Petit M.A."/>
            <person name="Pichon C."/>
            <person name="Rouy Z."/>
            <person name="Ruf C.S."/>
            <person name="Schneider D."/>
            <person name="Tourret J."/>
            <person name="Vacherie B."/>
            <person name="Vallenet D."/>
            <person name="Medigue C."/>
            <person name="Rocha E.P.C."/>
            <person name="Denamur E."/>
        </authorList>
    </citation>
    <scope>NUCLEOTIDE SEQUENCE [LARGE SCALE GENOMIC DNA]</scope>
    <source>
        <strain>ATCC 35469 / DSM 13698 / BCRC 15582 / CCUG 18766 / IAM 14443 / JCM 21226 / LMG 7866 / NBRC 102419 / NCTC 12128 / CDC 0568-73</strain>
    </source>
</reference>
<evidence type="ECO:0000255" key="1">
    <source>
        <dbReference type="HAMAP-Rule" id="MF_01566"/>
    </source>
</evidence>
<evidence type="ECO:0000256" key="2">
    <source>
        <dbReference type="SAM" id="MobiDB-lite"/>
    </source>
</evidence>
<protein>
    <recommendedName>
        <fullName evidence="1">UPF0370 protein YpfN</fullName>
    </recommendedName>
</protein>
<comment type="subcellular location">
    <subcellularLocation>
        <location evidence="1">Cell membrane</location>
        <topology evidence="1">Single-pass membrane protein</topology>
    </subcellularLocation>
</comment>
<comment type="similarity">
    <text evidence="1">Belongs to the UPF0370 family.</text>
</comment>
<feature type="chain" id="PRO_1000199726" description="UPF0370 protein YpfN">
    <location>
        <begin position="1"/>
        <end position="66"/>
    </location>
</feature>
<feature type="transmembrane region" description="Helical" evidence="1">
    <location>
        <begin position="4"/>
        <end position="24"/>
    </location>
</feature>
<feature type="region of interest" description="Disordered" evidence="2">
    <location>
        <begin position="39"/>
        <end position="66"/>
    </location>
</feature>
<feature type="compositionally biased region" description="Basic and acidic residues" evidence="2">
    <location>
        <begin position="42"/>
        <end position="51"/>
    </location>
</feature>
<sequence>MDWLAKYWWILVIVFLVGVLLNVIKDLKRVDHKKFLANKPELPPHRDFNDKWDDDDDWPKKDQPKK</sequence>
<name>YPFN_ESCF3</name>
<organism>
    <name type="scientific">Escherichia fergusonii (strain ATCC 35469 / DSM 13698 / CCUG 18766 / IAM 14443 / JCM 21226 / LMG 7866 / NBRC 102419 / NCTC 12128 / CDC 0568-73)</name>
    <dbReference type="NCBI Taxonomy" id="585054"/>
    <lineage>
        <taxon>Bacteria</taxon>
        <taxon>Pseudomonadati</taxon>
        <taxon>Pseudomonadota</taxon>
        <taxon>Gammaproteobacteria</taxon>
        <taxon>Enterobacterales</taxon>
        <taxon>Enterobacteriaceae</taxon>
        <taxon>Escherichia</taxon>
    </lineage>
</organism>
<gene>
    <name evidence="1" type="primary">ypfN</name>
    <name type="ordered locus">EFER_0705</name>
</gene>